<accession>Q5L3Z2</accession>
<sequence length="450" mass="51611">MENIHDLWDRVLAEIEQKISKPSFETWLKSTKAHSLRGDTLVIVAPNEFARDWLDSRYSHLIAETIYTITGEELAVKFIIPPNQDDEELEFQSSKKKQRKPYEETNDFPQSMLNPKYTFDTFVIGSGNRFAHAASLAVAEAPAKAYNPLFIYGGVGLGKTHLMHAIGHYVIEHNPSAKVVYLSSEKFTNEFINAIRDNRPDDFRNKYRNVDVLLIDDIQFLAGKEQTQEEFFHTFNTLHEESKQIVISSDRPPKEIPTLEDRLRSRFEWGLITDITPPDLETRIAILRKKAKAEGFDIPNEVMLYIANQIDSNIRELEGALIRVVAYSSLINKEITADLAAEALKDIIPSAKPKVITIQDIQRVVGQHFNIKMEDFKAKKRTKSVAFPRQIAMYLSRELTDCSLPKIGDEFGGRDHTTVIHAHEKISKLLQTDTQLQRHIQEIQEKLKQL</sequence>
<name>DNAA_GEOKA</name>
<dbReference type="EMBL" id="BA000043">
    <property type="protein sequence ID" value="BAD74286.1"/>
    <property type="molecule type" value="Genomic_DNA"/>
</dbReference>
<dbReference type="RefSeq" id="WP_011229517.1">
    <property type="nucleotide sequence ID" value="NC_006510.1"/>
</dbReference>
<dbReference type="SMR" id="Q5L3Z2"/>
<dbReference type="STRING" id="235909.GK0001"/>
<dbReference type="GeneID" id="32065377"/>
<dbReference type="KEGG" id="gka:GK0001"/>
<dbReference type="eggNOG" id="COG0593">
    <property type="taxonomic scope" value="Bacteria"/>
</dbReference>
<dbReference type="HOGENOM" id="CLU_026910_3_1_9"/>
<dbReference type="Proteomes" id="UP000001172">
    <property type="component" value="Chromosome"/>
</dbReference>
<dbReference type="GO" id="GO:0005737">
    <property type="term" value="C:cytoplasm"/>
    <property type="evidence" value="ECO:0007669"/>
    <property type="project" value="UniProtKB-SubCell"/>
</dbReference>
<dbReference type="GO" id="GO:0005886">
    <property type="term" value="C:plasma membrane"/>
    <property type="evidence" value="ECO:0007669"/>
    <property type="project" value="TreeGrafter"/>
</dbReference>
<dbReference type="GO" id="GO:0005524">
    <property type="term" value="F:ATP binding"/>
    <property type="evidence" value="ECO:0007669"/>
    <property type="project" value="UniProtKB-UniRule"/>
</dbReference>
<dbReference type="GO" id="GO:0016887">
    <property type="term" value="F:ATP hydrolysis activity"/>
    <property type="evidence" value="ECO:0007669"/>
    <property type="project" value="InterPro"/>
</dbReference>
<dbReference type="GO" id="GO:0003688">
    <property type="term" value="F:DNA replication origin binding"/>
    <property type="evidence" value="ECO:0007669"/>
    <property type="project" value="UniProtKB-UniRule"/>
</dbReference>
<dbReference type="GO" id="GO:0008289">
    <property type="term" value="F:lipid binding"/>
    <property type="evidence" value="ECO:0007669"/>
    <property type="project" value="UniProtKB-KW"/>
</dbReference>
<dbReference type="GO" id="GO:0006270">
    <property type="term" value="P:DNA replication initiation"/>
    <property type="evidence" value="ECO:0007669"/>
    <property type="project" value="UniProtKB-UniRule"/>
</dbReference>
<dbReference type="GO" id="GO:0006275">
    <property type="term" value="P:regulation of DNA replication"/>
    <property type="evidence" value="ECO:0007669"/>
    <property type="project" value="UniProtKB-UniRule"/>
</dbReference>
<dbReference type="CDD" id="cd00009">
    <property type="entry name" value="AAA"/>
    <property type="match status" value="1"/>
</dbReference>
<dbReference type="CDD" id="cd06571">
    <property type="entry name" value="Bac_DnaA_C"/>
    <property type="match status" value="1"/>
</dbReference>
<dbReference type="FunFam" id="1.10.1750.10:FF:000003">
    <property type="entry name" value="Chromosomal replication initiator protein DnaA"/>
    <property type="match status" value="1"/>
</dbReference>
<dbReference type="FunFam" id="1.10.8.60:FF:000003">
    <property type="entry name" value="Chromosomal replication initiator protein DnaA"/>
    <property type="match status" value="1"/>
</dbReference>
<dbReference type="FunFam" id="3.40.50.300:FF:000150">
    <property type="entry name" value="Chromosomal replication initiator protein DnaA"/>
    <property type="match status" value="1"/>
</dbReference>
<dbReference type="Gene3D" id="1.10.1750.10">
    <property type="match status" value="1"/>
</dbReference>
<dbReference type="Gene3D" id="1.10.8.60">
    <property type="match status" value="1"/>
</dbReference>
<dbReference type="Gene3D" id="3.30.300.180">
    <property type="match status" value="1"/>
</dbReference>
<dbReference type="Gene3D" id="3.40.50.300">
    <property type="entry name" value="P-loop containing nucleotide triphosphate hydrolases"/>
    <property type="match status" value="1"/>
</dbReference>
<dbReference type="HAMAP" id="MF_00377">
    <property type="entry name" value="DnaA_bact"/>
    <property type="match status" value="1"/>
</dbReference>
<dbReference type="InterPro" id="IPR003593">
    <property type="entry name" value="AAA+_ATPase"/>
</dbReference>
<dbReference type="InterPro" id="IPR001957">
    <property type="entry name" value="Chromosome_initiator_DnaA"/>
</dbReference>
<dbReference type="InterPro" id="IPR020591">
    <property type="entry name" value="Chromosome_initiator_DnaA-like"/>
</dbReference>
<dbReference type="InterPro" id="IPR018312">
    <property type="entry name" value="Chromosome_initiator_DnaA_CS"/>
</dbReference>
<dbReference type="InterPro" id="IPR013159">
    <property type="entry name" value="DnaA_C"/>
</dbReference>
<dbReference type="InterPro" id="IPR013317">
    <property type="entry name" value="DnaA_dom"/>
</dbReference>
<dbReference type="InterPro" id="IPR024633">
    <property type="entry name" value="DnaA_N_dom"/>
</dbReference>
<dbReference type="InterPro" id="IPR038454">
    <property type="entry name" value="DnaA_N_sf"/>
</dbReference>
<dbReference type="InterPro" id="IPR027417">
    <property type="entry name" value="P-loop_NTPase"/>
</dbReference>
<dbReference type="InterPro" id="IPR010921">
    <property type="entry name" value="Trp_repressor/repl_initiator"/>
</dbReference>
<dbReference type="NCBIfam" id="TIGR00362">
    <property type="entry name" value="DnaA"/>
    <property type="match status" value="1"/>
</dbReference>
<dbReference type="NCBIfam" id="NF010686">
    <property type="entry name" value="PRK14086.1"/>
    <property type="match status" value="1"/>
</dbReference>
<dbReference type="PANTHER" id="PTHR30050">
    <property type="entry name" value="CHROMOSOMAL REPLICATION INITIATOR PROTEIN DNAA"/>
    <property type="match status" value="1"/>
</dbReference>
<dbReference type="PANTHER" id="PTHR30050:SF2">
    <property type="entry name" value="CHROMOSOMAL REPLICATION INITIATOR PROTEIN DNAA"/>
    <property type="match status" value="1"/>
</dbReference>
<dbReference type="Pfam" id="PF00308">
    <property type="entry name" value="Bac_DnaA"/>
    <property type="match status" value="1"/>
</dbReference>
<dbReference type="Pfam" id="PF08299">
    <property type="entry name" value="Bac_DnaA_C"/>
    <property type="match status" value="1"/>
</dbReference>
<dbReference type="Pfam" id="PF11638">
    <property type="entry name" value="DnaA_N"/>
    <property type="match status" value="1"/>
</dbReference>
<dbReference type="PRINTS" id="PR00051">
    <property type="entry name" value="DNAA"/>
</dbReference>
<dbReference type="SMART" id="SM00382">
    <property type="entry name" value="AAA"/>
    <property type="match status" value="1"/>
</dbReference>
<dbReference type="SMART" id="SM00760">
    <property type="entry name" value="Bac_DnaA_C"/>
    <property type="match status" value="1"/>
</dbReference>
<dbReference type="SUPFAM" id="SSF52540">
    <property type="entry name" value="P-loop containing nucleoside triphosphate hydrolases"/>
    <property type="match status" value="1"/>
</dbReference>
<dbReference type="SUPFAM" id="SSF48295">
    <property type="entry name" value="TrpR-like"/>
    <property type="match status" value="1"/>
</dbReference>
<dbReference type="PROSITE" id="PS01008">
    <property type="entry name" value="DNAA"/>
    <property type="match status" value="1"/>
</dbReference>
<keyword id="KW-0067">ATP-binding</keyword>
<keyword id="KW-0963">Cytoplasm</keyword>
<keyword id="KW-0235">DNA replication</keyword>
<keyword id="KW-0238">DNA-binding</keyword>
<keyword id="KW-0446">Lipid-binding</keyword>
<keyword id="KW-0547">Nucleotide-binding</keyword>
<keyword id="KW-1185">Reference proteome</keyword>
<protein>
    <recommendedName>
        <fullName evidence="1">Chromosomal replication initiator protein DnaA</fullName>
    </recommendedName>
</protein>
<organism>
    <name type="scientific">Geobacillus kaustophilus (strain HTA426)</name>
    <dbReference type="NCBI Taxonomy" id="235909"/>
    <lineage>
        <taxon>Bacteria</taxon>
        <taxon>Bacillati</taxon>
        <taxon>Bacillota</taxon>
        <taxon>Bacilli</taxon>
        <taxon>Bacillales</taxon>
        <taxon>Anoxybacillaceae</taxon>
        <taxon>Geobacillus</taxon>
        <taxon>Geobacillus thermoleovorans group</taxon>
    </lineage>
</organism>
<reference key="1">
    <citation type="journal article" date="2004" name="Nucleic Acids Res.">
        <title>Thermoadaptation trait revealed by the genome sequence of thermophilic Geobacillus kaustophilus.</title>
        <authorList>
            <person name="Takami H."/>
            <person name="Takaki Y."/>
            <person name="Chee G.-J."/>
            <person name="Nishi S."/>
            <person name="Shimamura S."/>
            <person name="Suzuki H."/>
            <person name="Matsui S."/>
            <person name="Uchiyama I."/>
        </authorList>
    </citation>
    <scope>NUCLEOTIDE SEQUENCE [LARGE SCALE GENOMIC DNA]</scope>
    <source>
        <strain>HTA426</strain>
    </source>
</reference>
<feature type="chain" id="PRO_0000114181" description="Chromosomal replication initiator protein DnaA">
    <location>
        <begin position="1"/>
        <end position="450"/>
    </location>
</feature>
<feature type="region of interest" description="Domain I, interacts with DnaA modulators" evidence="1">
    <location>
        <begin position="1"/>
        <end position="84"/>
    </location>
</feature>
<feature type="region of interest" description="Domain II" evidence="1">
    <location>
        <begin position="84"/>
        <end position="111"/>
    </location>
</feature>
<feature type="region of interest" description="Disordered" evidence="2">
    <location>
        <begin position="89"/>
        <end position="108"/>
    </location>
</feature>
<feature type="region of interest" description="Domain III, AAA+ region" evidence="1">
    <location>
        <begin position="112"/>
        <end position="328"/>
    </location>
</feature>
<feature type="region of interest" description="Domain IV, binds dsDNA" evidence="1">
    <location>
        <begin position="329"/>
        <end position="450"/>
    </location>
</feature>
<feature type="binding site" evidence="1">
    <location>
        <position position="156"/>
    </location>
    <ligand>
        <name>ATP</name>
        <dbReference type="ChEBI" id="CHEBI:30616"/>
    </ligand>
</feature>
<feature type="binding site" evidence="1">
    <location>
        <position position="158"/>
    </location>
    <ligand>
        <name>ATP</name>
        <dbReference type="ChEBI" id="CHEBI:30616"/>
    </ligand>
</feature>
<feature type="binding site" evidence="1">
    <location>
        <position position="159"/>
    </location>
    <ligand>
        <name>ATP</name>
        <dbReference type="ChEBI" id="CHEBI:30616"/>
    </ligand>
</feature>
<feature type="binding site" evidence="1">
    <location>
        <position position="160"/>
    </location>
    <ligand>
        <name>ATP</name>
        <dbReference type="ChEBI" id="CHEBI:30616"/>
    </ligand>
</feature>
<proteinExistence type="inferred from homology"/>
<evidence type="ECO:0000255" key="1">
    <source>
        <dbReference type="HAMAP-Rule" id="MF_00377"/>
    </source>
</evidence>
<evidence type="ECO:0000256" key="2">
    <source>
        <dbReference type="SAM" id="MobiDB-lite"/>
    </source>
</evidence>
<comment type="function">
    <text evidence="1">Plays an essential role in the initiation and regulation of chromosomal replication. ATP-DnaA binds to the origin of replication (oriC) to initiate formation of the DNA replication initiation complex once per cell cycle. Binds the DnaA box (a 9 base pair repeat at the origin) and separates the double-stranded (ds)DNA. Forms a right-handed helical filament on oriC DNA; dsDNA binds to the exterior of the filament while single-stranded (ss)DNA is stabiized in the filament's interior. The ATP-DnaA-oriC complex binds and stabilizes one strand of the AT-rich DNA unwinding element (DUE), permitting loading of DNA polymerase. After initiation quickly degrades to an ADP-DnaA complex that is not apt for DNA replication. Binds acidic phospholipids.</text>
</comment>
<comment type="subunit">
    <text evidence="1">Oligomerizes as a right-handed, spiral filament on DNA at oriC.</text>
</comment>
<comment type="subcellular location">
    <subcellularLocation>
        <location evidence="1">Cytoplasm</location>
    </subcellularLocation>
</comment>
<comment type="domain">
    <text evidence="1">Domain I is involved in oligomerization and binding regulators, domain II is flexibile and of varying length in different bacteria, domain III forms the AAA+ region, while domain IV binds dsDNA.</text>
</comment>
<comment type="similarity">
    <text evidence="1">Belongs to the DnaA family.</text>
</comment>
<gene>
    <name evidence="1" type="primary">dnaA</name>
    <name type="ordered locus">GK0001</name>
</gene>